<evidence type="ECO:0000255" key="1">
    <source>
        <dbReference type="HAMAP-Rule" id="MF_01367"/>
    </source>
</evidence>
<evidence type="ECO:0000305" key="2"/>
<comment type="function">
    <text evidence="1">Binds to 23S rRNA.</text>
</comment>
<comment type="subunit">
    <text evidence="1">Part of the 50S ribosomal subunit.</text>
</comment>
<comment type="subcellular location">
    <subcellularLocation>
        <location>Plastid</location>
        <location>Chloroplast</location>
    </subcellularLocation>
</comment>
<comment type="similarity">
    <text evidence="1">Belongs to the universal ribosomal protein uL14 family.</text>
</comment>
<accession>A4GYU7</accession>
<dbReference type="EMBL" id="EF489041">
    <property type="protein sequence ID" value="ABO36742.1"/>
    <property type="molecule type" value="Genomic_DNA"/>
</dbReference>
<dbReference type="RefSeq" id="YP_001109538.1">
    <property type="nucleotide sequence ID" value="NC_009143.1"/>
</dbReference>
<dbReference type="SMR" id="A4GYU7"/>
<dbReference type="FunCoup" id="A4GYU7">
    <property type="interactions" value="606"/>
</dbReference>
<dbReference type="STRING" id="3694.A4GYU7"/>
<dbReference type="GeneID" id="4929709"/>
<dbReference type="KEGG" id="pop:4929709"/>
<dbReference type="InParanoid" id="A4GYU7"/>
<dbReference type="OrthoDB" id="813207at2759"/>
<dbReference type="Proteomes" id="UP000006729">
    <property type="component" value="Chloroplast"/>
</dbReference>
<dbReference type="GO" id="GO:0009507">
    <property type="term" value="C:chloroplast"/>
    <property type="evidence" value="ECO:0007669"/>
    <property type="project" value="UniProtKB-SubCell"/>
</dbReference>
<dbReference type="GO" id="GO:0022625">
    <property type="term" value="C:cytosolic large ribosomal subunit"/>
    <property type="evidence" value="ECO:0000318"/>
    <property type="project" value="GO_Central"/>
</dbReference>
<dbReference type="GO" id="GO:0070180">
    <property type="term" value="F:large ribosomal subunit rRNA binding"/>
    <property type="evidence" value="ECO:0000318"/>
    <property type="project" value="GO_Central"/>
</dbReference>
<dbReference type="GO" id="GO:0003735">
    <property type="term" value="F:structural constituent of ribosome"/>
    <property type="evidence" value="ECO:0000318"/>
    <property type="project" value="GO_Central"/>
</dbReference>
<dbReference type="GO" id="GO:0006412">
    <property type="term" value="P:translation"/>
    <property type="evidence" value="ECO:0007669"/>
    <property type="project" value="UniProtKB-UniRule"/>
</dbReference>
<dbReference type="CDD" id="cd00337">
    <property type="entry name" value="Ribosomal_uL14"/>
    <property type="match status" value="1"/>
</dbReference>
<dbReference type="FunFam" id="2.40.150.20:FF:000002">
    <property type="entry name" value="50S ribosomal protein L14, chloroplastic"/>
    <property type="match status" value="1"/>
</dbReference>
<dbReference type="Gene3D" id="2.40.150.20">
    <property type="entry name" value="Ribosomal protein L14"/>
    <property type="match status" value="1"/>
</dbReference>
<dbReference type="HAMAP" id="MF_01367">
    <property type="entry name" value="Ribosomal_uL14"/>
    <property type="match status" value="1"/>
</dbReference>
<dbReference type="InterPro" id="IPR000218">
    <property type="entry name" value="Ribosomal_uL14"/>
</dbReference>
<dbReference type="InterPro" id="IPR005745">
    <property type="entry name" value="Ribosomal_uL14_bac-type"/>
</dbReference>
<dbReference type="InterPro" id="IPR019972">
    <property type="entry name" value="Ribosomal_uL14_CS"/>
</dbReference>
<dbReference type="InterPro" id="IPR036853">
    <property type="entry name" value="Ribosomal_uL14_sf"/>
</dbReference>
<dbReference type="NCBIfam" id="TIGR01067">
    <property type="entry name" value="rplN_bact"/>
    <property type="match status" value="1"/>
</dbReference>
<dbReference type="PANTHER" id="PTHR11761">
    <property type="entry name" value="50S/60S RIBOSOMAL PROTEIN L14/L23"/>
    <property type="match status" value="1"/>
</dbReference>
<dbReference type="PANTHER" id="PTHR11761:SF3">
    <property type="entry name" value="LARGE RIBOSOMAL SUBUNIT PROTEIN UL14M"/>
    <property type="match status" value="1"/>
</dbReference>
<dbReference type="Pfam" id="PF00238">
    <property type="entry name" value="Ribosomal_L14"/>
    <property type="match status" value="1"/>
</dbReference>
<dbReference type="SMART" id="SM01374">
    <property type="entry name" value="Ribosomal_L14"/>
    <property type="match status" value="1"/>
</dbReference>
<dbReference type="SUPFAM" id="SSF50193">
    <property type="entry name" value="Ribosomal protein L14"/>
    <property type="match status" value="1"/>
</dbReference>
<dbReference type="PROSITE" id="PS00049">
    <property type="entry name" value="RIBOSOMAL_L14"/>
    <property type="match status" value="1"/>
</dbReference>
<protein>
    <recommendedName>
        <fullName evidence="1">Large ribosomal subunit protein uL14c</fullName>
    </recommendedName>
    <alternativeName>
        <fullName evidence="2">50S ribosomal protein L14, chloroplastic</fullName>
    </alternativeName>
</protein>
<proteinExistence type="inferred from homology"/>
<reference key="1">
    <citation type="journal article" date="2006" name="Science">
        <title>The genome of black cottonwood, Populus trichocarpa (Torr. &amp; Gray).</title>
        <authorList>
            <person name="Tuskan G.A."/>
            <person name="Difazio S."/>
            <person name="Jansson S."/>
            <person name="Bohlmann J."/>
            <person name="Grigoriev I."/>
            <person name="Hellsten U."/>
            <person name="Putnam N."/>
            <person name="Ralph S."/>
            <person name="Rombauts S."/>
            <person name="Salamov A."/>
            <person name="Schein J."/>
            <person name="Sterck L."/>
            <person name="Aerts A."/>
            <person name="Bhalerao R.R."/>
            <person name="Bhalerao R.P."/>
            <person name="Blaudez D."/>
            <person name="Boerjan W."/>
            <person name="Brun A."/>
            <person name="Brunner A."/>
            <person name="Busov V."/>
            <person name="Campbell M."/>
            <person name="Carlson J."/>
            <person name="Chalot M."/>
            <person name="Chapman J."/>
            <person name="Chen G.-L."/>
            <person name="Cooper D."/>
            <person name="Coutinho P.M."/>
            <person name="Couturier J."/>
            <person name="Covert S."/>
            <person name="Cronk Q."/>
            <person name="Cunningham R."/>
            <person name="Davis J."/>
            <person name="Degroeve S."/>
            <person name="Dejardin A."/>
            <person name="dePamphilis C.W."/>
            <person name="Detter J."/>
            <person name="Dirks B."/>
            <person name="Dubchak I."/>
            <person name="Duplessis S."/>
            <person name="Ehlting J."/>
            <person name="Ellis B."/>
            <person name="Gendler K."/>
            <person name="Goodstein D."/>
            <person name="Gribskov M."/>
            <person name="Grimwood J."/>
            <person name="Groover A."/>
            <person name="Gunter L."/>
            <person name="Hamberger B."/>
            <person name="Heinze B."/>
            <person name="Helariutta Y."/>
            <person name="Henrissat B."/>
            <person name="Holligan D."/>
            <person name="Holt R."/>
            <person name="Huang W."/>
            <person name="Islam-Faridi N."/>
            <person name="Jones S."/>
            <person name="Jones-Rhoades M."/>
            <person name="Jorgensen R."/>
            <person name="Joshi C."/>
            <person name="Kangasjaervi J."/>
            <person name="Karlsson J."/>
            <person name="Kelleher C."/>
            <person name="Kirkpatrick R."/>
            <person name="Kirst M."/>
            <person name="Kohler A."/>
            <person name="Kalluri U."/>
            <person name="Larimer F."/>
            <person name="Leebens-Mack J."/>
            <person name="Leple J.-C."/>
            <person name="Locascio P."/>
            <person name="Lou Y."/>
            <person name="Lucas S."/>
            <person name="Martin F."/>
            <person name="Montanini B."/>
            <person name="Napoli C."/>
            <person name="Nelson D.R."/>
            <person name="Nelson C."/>
            <person name="Nieminen K."/>
            <person name="Nilsson O."/>
            <person name="Pereda V."/>
            <person name="Peter G."/>
            <person name="Philippe R."/>
            <person name="Pilate G."/>
            <person name="Poliakov A."/>
            <person name="Razumovskaya J."/>
            <person name="Richardson P."/>
            <person name="Rinaldi C."/>
            <person name="Ritland K."/>
            <person name="Rouze P."/>
            <person name="Ryaboy D."/>
            <person name="Schmutz J."/>
            <person name="Schrader J."/>
            <person name="Segerman B."/>
            <person name="Shin H."/>
            <person name="Siddiqui A."/>
            <person name="Sterky F."/>
            <person name="Terry A."/>
            <person name="Tsai C.-J."/>
            <person name="Uberbacher E."/>
            <person name="Unneberg P."/>
            <person name="Vahala J."/>
            <person name="Wall K."/>
            <person name="Wessler S."/>
            <person name="Yang G."/>
            <person name="Yin T."/>
            <person name="Douglas C."/>
            <person name="Marra M."/>
            <person name="Sandberg G."/>
            <person name="Van de Peer Y."/>
            <person name="Rokhsar D.S."/>
        </authorList>
    </citation>
    <scope>NUCLEOTIDE SEQUENCE [LARGE SCALE GENOMIC DNA]</scope>
    <source>
        <strain>cv. Nisqually</strain>
    </source>
</reference>
<keyword id="KW-0150">Chloroplast</keyword>
<keyword id="KW-0934">Plastid</keyword>
<keyword id="KW-1185">Reference proteome</keyword>
<keyword id="KW-0687">Ribonucleoprotein</keyword>
<keyword id="KW-0689">Ribosomal protein</keyword>
<keyword id="KW-0694">RNA-binding</keyword>
<keyword id="KW-0699">rRNA-binding</keyword>
<organism>
    <name type="scientific">Populus trichocarpa</name>
    <name type="common">Western balsam poplar</name>
    <name type="synonym">Populus balsamifera subsp. trichocarpa</name>
    <dbReference type="NCBI Taxonomy" id="3694"/>
    <lineage>
        <taxon>Eukaryota</taxon>
        <taxon>Viridiplantae</taxon>
        <taxon>Streptophyta</taxon>
        <taxon>Embryophyta</taxon>
        <taxon>Tracheophyta</taxon>
        <taxon>Spermatophyta</taxon>
        <taxon>Magnoliopsida</taxon>
        <taxon>eudicotyledons</taxon>
        <taxon>Gunneridae</taxon>
        <taxon>Pentapetalae</taxon>
        <taxon>rosids</taxon>
        <taxon>fabids</taxon>
        <taxon>Malpighiales</taxon>
        <taxon>Salicaceae</taxon>
        <taxon>Saliceae</taxon>
        <taxon>Populus</taxon>
    </lineage>
</organism>
<feature type="chain" id="PRO_0000355902" description="Large ribosomal subunit protein uL14c">
    <location>
        <begin position="1"/>
        <end position="122"/>
    </location>
</feature>
<gene>
    <name evidence="1" type="primary">rpl14</name>
    <name type="ordered locus">Poptr_cp059</name>
</gene>
<sequence>MIQSQTHLNVADNSGARELMCIRIIGTSNRRYAHIGDIIIAVIKEAVPNSPLERSEVIRAVIVRTSKELKRDNGMIIRYDDNAAVVIDQEGNPKGTRIFGAIARELRQLNFTKIVSLAPEVL</sequence>
<geneLocation type="chloroplast"/>
<name>RK14_POPTR</name>